<protein>
    <recommendedName>
        <fullName evidence="1">UPF0391 membrane protein ETA_06630</fullName>
    </recommendedName>
</protein>
<accession>B2VH47</accession>
<dbReference type="EMBL" id="CU468135">
    <property type="protein sequence ID" value="CAO95709.1"/>
    <property type="molecule type" value="Genomic_DNA"/>
</dbReference>
<dbReference type="RefSeq" id="WP_004159835.1">
    <property type="nucleotide sequence ID" value="NC_010694.1"/>
</dbReference>
<dbReference type="STRING" id="465817.ETA_06630"/>
<dbReference type="KEGG" id="eta:ETA_06630"/>
<dbReference type="eggNOG" id="COG5487">
    <property type="taxonomic scope" value="Bacteria"/>
</dbReference>
<dbReference type="HOGENOM" id="CLU_187346_2_0_6"/>
<dbReference type="Proteomes" id="UP000001726">
    <property type="component" value="Chromosome"/>
</dbReference>
<dbReference type="GO" id="GO:0005886">
    <property type="term" value="C:plasma membrane"/>
    <property type="evidence" value="ECO:0007669"/>
    <property type="project" value="UniProtKB-SubCell"/>
</dbReference>
<dbReference type="HAMAP" id="MF_01361">
    <property type="entry name" value="UPF0391"/>
    <property type="match status" value="1"/>
</dbReference>
<dbReference type="InterPro" id="IPR009760">
    <property type="entry name" value="DUF1328"/>
</dbReference>
<dbReference type="NCBIfam" id="NF010229">
    <property type="entry name" value="PRK13682.1-4"/>
    <property type="match status" value="1"/>
</dbReference>
<dbReference type="NCBIfam" id="NF010230">
    <property type="entry name" value="PRK13682.1-5"/>
    <property type="match status" value="1"/>
</dbReference>
<dbReference type="Pfam" id="PF07043">
    <property type="entry name" value="DUF1328"/>
    <property type="match status" value="1"/>
</dbReference>
<dbReference type="PIRSF" id="PIRSF036466">
    <property type="entry name" value="UCP036466"/>
    <property type="match status" value="1"/>
</dbReference>
<feature type="chain" id="PRO_1000143713" description="UPF0391 membrane protein ETA_06630">
    <location>
        <begin position="1"/>
        <end position="53"/>
    </location>
</feature>
<feature type="transmembrane region" description="Helical" evidence="1">
    <location>
        <begin position="4"/>
        <end position="24"/>
    </location>
</feature>
<feature type="transmembrane region" description="Helical" evidence="1">
    <location>
        <begin position="27"/>
        <end position="47"/>
    </location>
</feature>
<proteinExistence type="inferred from homology"/>
<organism>
    <name type="scientific">Erwinia tasmaniensis (strain DSM 17950 / CFBP 7177 / CIP 109463 / NCPPB 4357 / Et1/99)</name>
    <dbReference type="NCBI Taxonomy" id="465817"/>
    <lineage>
        <taxon>Bacteria</taxon>
        <taxon>Pseudomonadati</taxon>
        <taxon>Pseudomonadota</taxon>
        <taxon>Gammaproteobacteria</taxon>
        <taxon>Enterobacterales</taxon>
        <taxon>Erwiniaceae</taxon>
        <taxon>Erwinia</taxon>
    </lineage>
</organism>
<evidence type="ECO:0000255" key="1">
    <source>
        <dbReference type="HAMAP-Rule" id="MF_01361"/>
    </source>
</evidence>
<sequence length="53" mass="5609">MFRWGIIFLVIALIAAALGFGGLAGTAAWAAKVVFVVGIVIFLISLFTGRKKL</sequence>
<name>Y663_ERWT9</name>
<reference key="1">
    <citation type="journal article" date="2008" name="Environ. Microbiol.">
        <title>The genome of Erwinia tasmaniensis strain Et1/99, a non-pathogenic bacterium in the genus Erwinia.</title>
        <authorList>
            <person name="Kube M."/>
            <person name="Migdoll A.M."/>
            <person name="Mueller I."/>
            <person name="Kuhl H."/>
            <person name="Beck A."/>
            <person name="Reinhardt R."/>
            <person name="Geider K."/>
        </authorList>
    </citation>
    <scope>NUCLEOTIDE SEQUENCE [LARGE SCALE GENOMIC DNA]</scope>
    <source>
        <strain>DSM 17950 / CFBP 7177 / CIP 109463 / NCPPB 4357 / Et1/99</strain>
    </source>
</reference>
<keyword id="KW-1003">Cell membrane</keyword>
<keyword id="KW-0472">Membrane</keyword>
<keyword id="KW-1185">Reference proteome</keyword>
<keyword id="KW-0812">Transmembrane</keyword>
<keyword id="KW-1133">Transmembrane helix</keyword>
<gene>
    <name type="ordered locus">ETA_06630</name>
</gene>
<comment type="subcellular location">
    <subcellularLocation>
        <location evidence="1">Cell membrane</location>
        <topology evidence="1">Multi-pass membrane protein</topology>
    </subcellularLocation>
</comment>
<comment type="similarity">
    <text evidence="1">Belongs to the UPF0391 family.</text>
</comment>